<proteinExistence type="inferred from homology"/>
<dbReference type="EC" id="5.4.99.12" evidence="1"/>
<dbReference type="EMBL" id="CP001635">
    <property type="protein sequence ID" value="ACS18068.1"/>
    <property type="molecule type" value="Genomic_DNA"/>
</dbReference>
<dbReference type="SMR" id="C5CSH0"/>
<dbReference type="STRING" id="543728.Vapar_1417"/>
<dbReference type="KEGG" id="vap:Vapar_1417"/>
<dbReference type="eggNOG" id="COG0101">
    <property type="taxonomic scope" value="Bacteria"/>
</dbReference>
<dbReference type="HOGENOM" id="CLU_014673_0_2_4"/>
<dbReference type="OrthoDB" id="9811823at2"/>
<dbReference type="GO" id="GO:0003723">
    <property type="term" value="F:RNA binding"/>
    <property type="evidence" value="ECO:0007669"/>
    <property type="project" value="InterPro"/>
</dbReference>
<dbReference type="GO" id="GO:0160147">
    <property type="term" value="F:tRNA pseudouridine(38-40) synthase activity"/>
    <property type="evidence" value="ECO:0007669"/>
    <property type="project" value="UniProtKB-EC"/>
</dbReference>
<dbReference type="GO" id="GO:0031119">
    <property type="term" value="P:tRNA pseudouridine synthesis"/>
    <property type="evidence" value="ECO:0007669"/>
    <property type="project" value="UniProtKB-UniRule"/>
</dbReference>
<dbReference type="CDD" id="cd02570">
    <property type="entry name" value="PseudoU_synth_EcTruA"/>
    <property type="match status" value="1"/>
</dbReference>
<dbReference type="FunFam" id="3.30.70.580:FF:000001">
    <property type="entry name" value="tRNA pseudouridine synthase A"/>
    <property type="match status" value="1"/>
</dbReference>
<dbReference type="Gene3D" id="3.30.70.660">
    <property type="entry name" value="Pseudouridine synthase I, catalytic domain, C-terminal subdomain"/>
    <property type="match status" value="1"/>
</dbReference>
<dbReference type="Gene3D" id="3.30.70.580">
    <property type="entry name" value="Pseudouridine synthase I, catalytic domain, N-terminal subdomain"/>
    <property type="match status" value="1"/>
</dbReference>
<dbReference type="HAMAP" id="MF_00171">
    <property type="entry name" value="TruA"/>
    <property type="match status" value="1"/>
</dbReference>
<dbReference type="InterPro" id="IPR020103">
    <property type="entry name" value="PsdUridine_synth_cat_dom_sf"/>
</dbReference>
<dbReference type="InterPro" id="IPR001406">
    <property type="entry name" value="PsdUridine_synth_TruA"/>
</dbReference>
<dbReference type="InterPro" id="IPR020097">
    <property type="entry name" value="PsdUridine_synth_TruA_a/b_dom"/>
</dbReference>
<dbReference type="InterPro" id="IPR020095">
    <property type="entry name" value="PsdUridine_synth_TruA_C"/>
</dbReference>
<dbReference type="InterPro" id="IPR020094">
    <property type="entry name" value="TruA/RsuA/RluB/E/F_N"/>
</dbReference>
<dbReference type="NCBIfam" id="TIGR00071">
    <property type="entry name" value="hisT_truA"/>
    <property type="match status" value="1"/>
</dbReference>
<dbReference type="PANTHER" id="PTHR11142">
    <property type="entry name" value="PSEUDOURIDYLATE SYNTHASE"/>
    <property type="match status" value="1"/>
</dbReference>
<dbReference type="PANTHER" id="PTHR11142:SF0">
    <property type="entry name" value="TRNA PSEUDOURIDINE SYNTHASE-LIKE 1"/>
    <property type="match status" value="1"/>
</dbReference>
<dbReference type="Pfam" id="PF01416">
    <property type="entry name" value="PseudoU_synth_1"/>
    <property type="match status" value="2"/>
</dbReference>
<dbReference type="PIRSF" id="PIRSF001430">
    <property type="entry name" value="tRNA_psdUrid_synth"/>
    <property type="match status" value="1"/>
</dbReference>
<dbReference type="SUPFAM" id="SSF55120">
    <property type="entry name" value="Pseudouridine synthase"/>
    <property type="match status" value="1"/>
</dbReference>
<name>TRUA_VARPS</name>
<gene>
    <name evidence="1" type="primary">truA</name>
    <name type="ordered locus">Vapar_1417</name>
</gene>
<reference key="1">
    <citation type="journal article" date="2011" name="J. Bacteriol.">
        <title>Complete genome sequence of the metabolically versatile plant growth-promoting endophyte, Variovorax paradoxus S110.</title>
        <authorList>
            <person name="Han J.I."/>
            <person name="Choi H.K."/>
            <person name="Lee S.W."/>
            <person name="Orwin P.M."/>
            <person name="Kim J."/>
            <person name="Laroe S.L."/>
            <person name="Kim T.G."/>
            <person name="O'Neil J."/>
            <person name="Leadbetter J.R."/>
            <person name="Lee S.Y."/>
            <person name="Hur C.G."/>
            <person name="Spain J.C."/>
            <person name="Ovchinnikova G."/>
            <person name="Goodwin L."/>
            <person name="Han C."/>
        </authorList>
    </citation>
    <scope>NUCLEOTIDE SEQUENCE [LARGE SCALE GENOMIC DNA]</scope>
    <source>
        <strain>S110</strain>
    </source>
</reference>
<comment type="function">
    <text evidence="1">Formation of pseudouridine at positions 38, 39 and 40 in the anticodon stem and loop of transfer RNAs.</text>
</comment>
<comment type="catalytic activity">
    <reaction evidence="1">
        <text>uridine(38/39/40) in tRNA = pseudouridine(38/39/40) in tRNA</text>
        <dbReference type="Rhea" id="RHEA:22376"/>
        <dbReference type="Rhea" id="RHEA-COMP:10085"/>
        <dbReference type="Rhea" id="RHEA-COMP:10087"/>
        <dbReference type="ChEBI" id="CHEBI:65314"/>
        <dbReference type="ChEBI" id="CHEBI:65315"/>
        <dbReference type="EC" id="5.4.99.12"/>
    </reaction>
</comment>
<comment type="subunit">
    <text evidence="1">Homodimer.</text>
</comment>
<comment type="similarity">
    <text evidence="1">Belongs to the tRNA pseudouridine synthase TruA family.</text>
</comment>
<keyword id="KW-0413">Isomerase</keyword>
<keyword id="KW-0819">tRNA processing</keyword>
<organism>
    <name type="scientific">Variovorax paradoxus (strain S110)</name>
    <dbReference type="NCBI Taxonomy" id="543728"/>
    <lineage>
        <taxon>Bacteria</taxon>
        <taxon>Pseudomonadati</taxon>
        <taxon>Pseudomonadota</taxon>
        <taxon>Betaproteobacteria</taxon>
        <taxon>Burkholderiales</taxon>
        <taxon>Comamonadaceae</taxon>
        <taxon>Variovorax</taxon>
    </lineage>
</organism>
<sequence length="270" mass="30027">MRLALGIRYNGQAYEGWQSQRSGRTVQDKLEAALAKFAAQPIGTLCAGRTDAGVHALMQVVHFDTTVEREPFSWMRGTNRFLPDDIAVQWAQPVPDEFHCRASALARRYLYVLSQSPVRPSLDSGRVGWSMHPLDGDAMRAAAALLVGKHDFSSFRASACQARSPVKDLRRIEITRVGSGDRCRWHFEFEADAFLHHMIRNLMGCLVRIGRGDERPEWITEVLEARSRKVAAPTFSANGLYFLGPLYDAKWGLPAEATLQAGGAPYDGPP</sequence>
<accession>C5CSH0</accession>
<evidence type="ECO:0000255" key="1">
    <source>
        <dbReference type="HAMAP-Rule" id="MF_00171"/>
    </source>
</evidence>
<feature type="chain" id="PRO_1000203705" description="tRNA pseudouridine synthase A">
    <location>
        <begin position="1"/>
        <end position="270"/>
    </location>
</feature>
<feature type="active site" description="Nucleophile" evidence="1">
    <location>
        <position position="51"/>
    </location>
</feature>
<feature type="binding site" evidence="1">
    <location>
        <position position="109"/>
    </location>
    <ligand>
        <name>substrate</name>
    </ligand>
</feature>
<protein>
    <recommendedName>
        <fullName evidence="1">tRNA pseudouridine synthase A</fullName>
        <ecNumber evidence="1">5.4.99.12</ecNumber>
    </recommendedName>
    <alternativeName>
        <fullName evidence="1">tRNA pseudouridine(38-40) synthase</fullName>
    </alternativeName>
    <alternativeName>
        <fullName evidence="1">tRNA pseudouridylate synthase I</fullName>
    </alternativeName>
    <alternativeName>
        <fullName evidence="1">tRNA-uridine isomerase I</fullName>
    </alternativeName>
</protein>